<feature type="chain" id="PRO_0000207495" description="Delta(14)-sterol reductase">
    <location>
        <begin position="1"/>
        <end position="430"/>
    </location>
</feature>
<feature type="transmembrane region" description="Helical" evidence="3">
    <location>
        <begin position="12"/>
        <end position="32"/>
    </location>
</feature>
<feature type="transmembrane region" description="Helical" evidence="3">
    <location>
        <begin position="67"/>
        <end position="87"/>
    </location>
</feature>
<feature type="transmembrane region" description="Helical" evidence="3">
    <location>
        <begin position="109"/>
        <end position="129"/>
    </location>
</feature>
<feature type="transmembrane region" description="Helical" evidence="3">
    <location>
        <begin position="230"/>
        <end position="250"/>
    </location>
</feature>
<feature type="transmembrane region" description="Helical" evidence="3">
    <location>
        <begin position="267"/>
        <end position="287"/>
    </location>
</feature>
<feature type="transmembrane region" description="Helical" evidence="3">
    <location>
        <begin position="290"/>
        <end position="310"/>
    </location>
</feature>
<feature type="transmembrane region" description="Helical" evidence="3">
    <location>
        <begin position="349"/>
        <end position="369"/>
    </location>
</feature>
<feature type="transmembrane region" description="Helical" evidence="3">
    <location>
        <begin position="376"/>
        <end position="396"/>
    </location>
</feature>
<feature type="binding site" evidence="2">
    <location>
        <position position="323"/>
    </location>
    <ligand>
        <name>NADP(+)</name>
        <dbReference type="ChEBI" id="CHEBI:58349"/>
    </ligand>
</feature>
<feature type="binding site" evidence="2">
    <location>
        <position position="327"/>
    </location>
    <ligand>
        <name>NADP(+)</name>
        <dbReference type="ChEBI" id="CHEBI:58349"/>
    </ligand>
</feature>
<feature type="binding site" evidence="2">
    <location>
        <position position="350"/>
    </location>
    <ligand>
        <name>NADP(+)</name>
        <dbReference type="ChEBI" id="CHEBI:58349"/>
    </ligand>
</feature>
<feature type="binding site" evidence="2">
    <location>
        <position position="355"/>
    </location>
    <ligand>
        <name>NADP(+)</name>
        <dbReference type="ChEBI" id="CHEBI:58349"/>
    </ligand>
</feature>
<feature type="binding site" evidence="2">
    <location>
        <begin position="362"/>
        <end position="363"/>
    </location>
    <ligand>
        <name>NADP(+)</name>
        <dbReference type="ChEBI" id="CHEBI:58349"/>
    </ligand>
</feature>
<feature type="binding site" evidence="2">
    <location>
        <position position="402"/>
    </location>
    <ligand>
        <name>NADP(+)</name>
        <dbReference type="ChEBI" id="CHEBI:58349"/>
    </ligand>
</feature>
<feature type="binding site" evidence="2">
    <location>
        <begin position="406"/>
        <end position="410"/>
    </location>
    <ligand>
        <name>NADP(+)</name>
        <dbReference type="ChEBI" id="CHEBI:58349"/>
    </ligand>
</feature>
<feature type="binding site" evidence="2">
    <location>
        <position position="417"/>
    </location>
    <ligand>
        <name>NADP(+)</name>
        <dbReference type="ChEBI" id="CHEBI:58349"/>
    </ligand>
</feature>
<comment type="function">
    <text evidence="1">Reduces the C14=C15 double bond of 4,4-dimethyl-cholesta-8,14,24-trienol to produce 4,4-dimethyl-cholesta-8,24-dienol.</text>
</comment>
<comment type="catalytic activity">
    <reaction>
        <text>4,4-dimethyl-5alpha-cholesta-8,24-dien-3beta-ol + NADP(+) = 4,4-dimethyl-5alpha-cholesta-8,14,24-trien-3beta-ol + NADPH + H(+)</text>
        <dbReference type="Rhea" id="RHEA:18561"/>
        <dbReference type="ChEBI" id="CHEBI:15378"/>
        <dbReference type="ChEBI" id="CHEBI:17813"/>
        <dbReference type="ChEBI" id="CHEBI:18364"/>
        <dbReference type="ChEBI" id="CHEBI:57783"/>
        <dbReference type="ChEBI" id="CHEBI:58349"/>
        <dbReference type="EC" id="1.3.1.70"/>
    </reaction>
</comment>
<comment type="pathway">
    <text>Steroid biosynthesis; zymosterol biosynthesis; zymosterol from lanosterol: step 2/6.</text>
</comment>
<comment type="subcellular location">
    <subcellularLocation>
        <location evidence="4">Membrane</location>
        <topology evidence="4">Multi-pass membrane protein</topology>
    </subcellularLocation>
</comment>
<comment type="similarity">
    <text evidence="4">Belongs to the ERG4/ERG24 family.</text>
</comment>
<name>ERG24_ASCIM</name>
<gene>
    <name type="primary">ERG3</name>
</gene>
<evidence type="ECO:0000250" key="1"/>
<evidence type="ECO:0000250" key="2">
    <source>
        <dbReference type="UniProtKB" id="G4SW86"/>
    </source>
</evidence>
<evidence type="ECO:0000255" key="3"/>
<evidence type="ECO:0000305" key="4"/>
<sequence>MGGKDYEFGGPIGTGVLMLILPPISHYLHFLITPRGAPPPEFWSAPLETLKSVTPTFSSLFSLHATLAVAAYYLLLVALMYVLPAEIAEGVVLKDGSRLKYRCNAFTTFLVFFTFLGTMTVLEGPTWWFWSYLTDNFAQLQSASIVFSYAMSLWVYIRSYRPMPKGKEVILSPVGFKGNHIHDFWMGRELNPRIGEWLDIKQLHELRPGLMGWILFNLAWTVKQYNTHGFVSDSIVLVNLFETWYVVDALWNESKVLTTMDITTDGLGVMLLFGNAVWVPFMYCLQARYLASFPVHLGLLGIAGVLAVQFTGYAIFRGANNQKNAFRTNPADPAVSHLKFMTTKSGSKLLISGWWGVARHVNYFGDWIMAWSYCLTTGFNTPLTYFYVIYFGILLLHRDRRDEAKCREKYGKDWDRYCKVVKWRIIPGIY</sequence>
<keyword id="KW-0444">Lipid biosynthesis</keyword>
<keyword id="KW-0443">Lipid metabolism</keyword>
<keyword id="KW-0472">Membrane</keyword>
<keyword id="KW-0521">NADP</keyword>
<keyword id="KW-0560">Oxidoreductase</keyword>
<keyword id="KW-0752">Steroid biosynthesis</keyword>
<keyword id="KW-0753">Steroid metabolism</keyword>
<keyword id="KW-0756">Sterol biosynthesis</keyword>
<keyword id="KW-1207">Sterol metabolism</keyword>
<keyword id="KW-0812">Transmembrane</keyword>
<keyword id="KW-1133">Transmembrane helix</keyword>
<dbReference type="EC" id="1.3.1.70"/>
<dbReference type="EMBL" id="Y10624">
    <property type="protein sequence ID" value="CAA71650.1"/>
    <property type="molecule type" value="Genomic_DNA"/>
</dbReference>
<dbReference type="SMR" id="P78575"/>
<dbReference type="UniPathway" id="UPA00770">
    <property type="reaction ID" value="UER00755"/>
</dbReference>
<dbReference type="GO" id="GO:0005789">
    <property type="term" value="C:endoplasmic reticulum membrane"/>
    <property type="evidence" value="ECO:0007669"/>
    <property type="project" value="TreeGrafter"/>
</dbReference>
<dbReference type="GO" id="GO:0050613">
    <property type="term" value="F:Delta14-sterol reductase activity"/>
    <property type="evidence" value="ECO:0007669"/>
    <property type="project" value="UniProtKB-EC"/>
</dbReference>
<dbReference type="GO" id="GO:0050661">
    <property type="term" value="F:NADP binding"/>
    <property type="evidence" value="ECO:0000250"/>
    <property type="project" value="UniProtKB"/>
</dbReference>
<dbReference type="GO" id="GO:0006696">
    <property type="term" value="P:ergosterol biosynthetic process"/>
    <property type="evidence" value="ECO:0007669"/>
    <property type="project" value="TreeGrafter"/>
</dbReference>
<dbReference type="FunFam" id="1.20.120.1630:FF:000008">
    <property type="entry name" value="C-14 sterol reductase"/>
    <property type="match status" value="1"/>
</dbReference>
<dbReference type="Gene3D" id="1.20.120.1630">
    <property type="match status" value="1"/>
</dbReference>
<dbReference type="InterPro" id="IPR001171">
    <property type="entry name" value="ERG24_DHCR-like"/>
</dbReference>
<dbReference type="InterPro" id="IPR018083">
    <property type="entry name" value="Sterol_reductase_CS"/>
</dbReference>
<dbReference type="PANTHER" id="PTHR21257">
    <property type="entry name" value="DELTA(14)-STEROL REDUCTASE"/>
    <property type="match status" value="1"/>
</dbReference>
<dbReference type="PANTHER" id="PTHR21257:SF52">
    <property type="entry name" value="DELTA(14)-STEROL REDUCTASE TM7SF2"/>
    <property type="match status" value="1"/>
</dbReference>
<dbReference type="Pfam" id="PF01222">
    <property type="entry name" value="ERG4_ERG24"/>
    <property type="match status" value="1"/>
</dbReference>
<dbReference type="PROSITE" id="PS01017">
    <property type="entry name" value="STEROL_REDUCT_1"/>
    <property type="match status" value="1"/>
</dbReference>
<dbReference type="PROSITE" id="PS01018">
    <property type="entry name" value="STEROL_REDUCT_2"/>
    <property type="match status" value="1"/>
</dbReference>
<proteinExistence type="inferred from homology"/>
<organism>
    <name type="scientific">Ascobolus immersus</name>
    <dbReference type="NCBI Taxonomy" id="5191"/>
    <lineage>
        <taxon>Eukaryota</taxon>
        <taxon>Fungi</taxon>
        <taxon>Dikarya</taxon>
        <taxon>Ascomycota</taxon>
        <taxon>Pezizomycotina</taxon>
        <taxon>Pezizomycetes</taxon>
        <taxon>Pezizales</taxon>
        <taxon>Ascobolaceae</taxon>
        <taxon>Ascobolus</taxon>
    </lineage>
</organism>
<reference key="1">
    <citation type="submission" date="1997-01" db="EMBL/GenBank/DDBJ databases">
        <authorList>
            <person name="Kasbekar D.P."/>
        </authorList>
    </citation>
    <scope>NUCLEOTIDE SEQUENCE [GENOMIC DNA]</scope>
    <source>
        <strain>RN42</strain>
    </source>
</reference>
<accession>P78575</accession>
<protein>
    <recommendedName>
        <fullName>Delta(14)-sterol reductase</fullName>
        <ecNumber>1.3.1.70</ecNumber>
    </recommendedName>
    <alternativeName>
        <fullName>C-14 sterol reductase</fullName>
    </alternativeName>
    <alternativeName>
        <fullName>Sterol C14-reductase</fullName>
    </alternativeName>
</protein>